<feature type="chain" id="PRO_1000136776" description="Ribosome maturation factor RimP">
    <location>
        <begin position="1"/>
        <end position="183"/>
    </location>
</feature>
<comment type="function">
    <text evidence="1">Required for maturation of 30S ribosomal subunits.</text>
</comment>
<comment type="subcellular location">
    <subcellularLocation>
        <location evidence="1">Cytoplasm</location>
    </subcellularLocation>
</comment>
<comment type="similarity">
    <text evidence="1">Belongs to the RimP family.</text>
</comment>
<keyword id="KW-0963">Cytoplasm</keyword>
<keyword id="KW-1185">Reference proteome</keyword>
<keyword id="KW-0690">Ribosome biogenesis</keyword>
<sequence length="183" mass="20522">MNWQQAVETTVTGMGYELVECERSARGLLCVYIDRVPGSVYLTGPGEFVLVEDCELVTRQLRYLFEVENVDYSRLEVSSPGLDRPLRKVGDFLRFLGSDVDVTLKAPFQGRKNYRGLLRQAGDTPEQGFELVFQDGKEDKVLGFALDEVREARLVPVVDFKGRMRQTADAPQGAAQETGGHEE</sequence>
<proteinExistence type="inferred from homology"/>
<accession>B1XY65</accession>
<reference key="1">
    <citation type="submission" date="2008-03" db="EMBL/GenBank/DDBJ databases">
        <title>Complete sequence of Leptothrix cholodnii SP-6.</title>
        <authorList>
            <consortium name="US DOE Joint Genome Institute"/>
            <person name="Copeland A."/>
            <person name="Lucas S."/>
            <person name="Lapidus A."/>
            <person name="Glavina del Rio T."/>
            <person name="Dalin E."/>
            <person name="Tice H."/>
            <person name="Bruce D."/>
            <person name="Goodwin L."/>
            <person name="Pitluck S."/>
            <person name="Chertkov O."/>
            <person name="Brettin T."/>
            <person name="Detter J.C."/>
            <person name="Han C."/>
            <person name="Kuske C.R."/>
            <person name="Schmutz J."/>
            <person name="Larimer F."/>
            <person name="Land M."/>
            <person name="Hauser L."/>
            <person name="Kyrpides N."/>
            <person name="Lykidis A."/>
            <person name="Emerson D."/>
            <person name="Richardson P."/>
        </authorList>
    </citation>
    <scope>NUCLEOTIDE SEQUENCE [LARGE SCALE GENOMIC DNA]</scope>
    <source>
        <strain>ATCC 51168 / LMG 8142 / SP-6</strain>
    </source>
</reference>
<organism>
    <name type="scientific">Leptothrix cholodnii (strain ATCC 51168 / LMG 8142 / SP-6)</name>
    <name type="common">Leptothrix discophora (strain SP-6)</name>
    <dbReference type="NCBI Taxonomy" id="395495"/>
    <lineage>
        <taxon>Bacteria</taxon>
        <taxon>Pseudomonadati</taxon>
        <taxon>Pseudomonadota</taxon>
        <taxon>Betaproteobacteria</taxon>
        <taxon>Burkholderiales</taxon>
        <taxon>Sphaerotilaceae</taxon>
        <taxon>Leptothrix</taxon>
    </lineage>
</organism>
<name>RIMP_LEPCP</name>
<protein>
    <recommendedName>
        <fullName evidence="1">Ribosome maturation factor RimP</fullName>
    </recommendedName>
</protein>
<evidence type="ECO:0000255" key="1">
    <source>
        <dbReference type="HAMAP-Rule" id="MF_01077"/>
    </source>
</evidence>
<gene>
    <name evidence="1" type="primary">rimP</name>
    <name type="ordered locus">Lcho_1699</name>
</gene>
<dbReference type="EMBL" id="CP001013">
    <property type="protein sequence ID" value="ACB33966.1"/>
    <property type="molecule type" value="Genomic_DNA"/>
</dbReference>
<dbReference type="RefSeq" id="WP_012346727.1">
    <property type="nucleotide sequence ID" value="NC_010524.1"/>
</dbReference>
<dbReference type="SMR" id="B1XY65"/>
<dbReference type="STRING" id="395495.Lcho_1699"/>
<dbReference type="KEGG" id="lch:Lcho_1699"/>
<dbReference type="eggNOG" id="COG0779">
    <property type="taxonomic scope" value="Bacteria"/>
</dbReference>
<dbReference type="HOGENOM" id="CLU_070525_1_0_4"/>
<dbReference type="OrthoDB" id="9805006at2"/>
<dbReference type="Proteomes" id="UP000001693">
    <property type="component" value="Chromosome"/>
</dbReference>
<dbReference type="GO" id="GO:0005829">
    <property type="term" value="C:cytosol"/>
    <property type="evidence" value="ECO:0007669"/>
    <property type="project" value="TreeGrafter"/>
</dbReference>
<dbReference type="GO" id="GO:0000028">
    <property type="term" value="P:ribosomal small subunit assembly"/>
    <property type="evidence" value="ECO:0007669"/>
    <property type="project" value="TreeGrafter"/>
</dbReference>
<dbReference type="GO" id="GO:0006412">
    <property type="term" value="P:translation"/>
    <property type="evidence" value="ECO:0007669"/>
    <property type="project" value="TreeGrafter"/>
</dbReference>
<dbReference type="CDD" id="cd01734">
    <property type="entry name" value="YlxS_C"/>
    <property type="match status" value="1"/>
</dbReference>
<dbReference type="Gene3D" id="2.30.30.180">
    <property type="entry name" value="Ribosome maturation factor RimP, C-terminal domain"/>
    <property type="match status" value="1"/>
</dbReference>
<dbReference type="Gene3D" id="3.30.300.70">
    <property type="entry name" value="RimP-like superfamily, N-terminal"/>
    <property type="match status" value="1"/>
</dbReference>
<dbReference type="HAMAP" id="MF_01077">
    <property type="entry name" value="RimP"/>
    <property type="match status" value="1"/>
</dbReference>
<dbReference type="InterPro" id="IPR003728">
    <property type="entry name" value="Ribosome_maturation_RimP"/>
</dbReference>
<dbReference type="InterPro" id="IPR028998">
    <property type="entry name" value="RimP_C"/>
</dbReference>
<dbReference type="InterPro" id="IPR036847">
    <property type="entry name" value="RimP_C_sf"/>
</dbReference>
<dbReference type="InterPro" id="IPR028989">
    <property type="entry name" value="RimP_N"/>
</dbReference>
<dbReference type="InterPro" id="IPR035956">
    <property type="entry name" value="RimP_N_sf"/>
</dbReference>
<dbReference type="NCBIfam" id="NF000929">
    <property type="entry name" value="PRK00092.2-1"/>
    <property type="match status" value="1"/>
</dbReference>
<dbReference type="PANTHER" id="PTHR33867">
    <property type="entry name" value="RIBOSOME MATURATION FACTOR RIMP"/>
    <property type="match status" value="1"/>
</dbReference>
<dbReference type="PANTHER" id="PTHR33867:SF1">
    <property type="entry name" value="RIBOSOME MATURATION FACTOR RIMP"/>
    <property type="match status" value="1"/>
</dbReference>
<dbReference type="Pfam" id="PF17384">
    <property type="entry name" value="DUF150_C"/>
    <property type="match status" value="1"/>
</dbReference>
<dbReference type="Pfam" id="PF02576">
    <property type="entry name" value="RimP_N"/>
    <property type="match status" value="1"/>
</dbReference>
<dbReference type="SUPFAM" id="SSF74942">
    <property type="entry name" value="YhbC-like, C-terminal domain"/>
    <property type="match status" value="1"/>
</dbReference>
<dbReference type="SUPFAM" id="SSF75420">
    <property type="entry name" value="YhbC-like, N-terminal domain"/>
    <property type="match status" value="1"/>
</dbReference>